<gene>
    <name evidence="1" type="primary">ispD</name>
    <name type="ordered locus">P9215_05341</name>
</gene>
<organism>
    <name type="scientific">Prochlorococcus marinus (strain MIT 9215)</name>
    <dbReference type="NCBI Taxonomy" id="93060"/>
    <lineage>
        <taxon>Bacteria</taxon>
        <taxon>Bacillati</taxon>
        <taxon>Cyanobacteriota</taxon>
        <taxon>Cyanophyceae</taxon>
        <taxon>Synechococcales</taxon>
        <taxon>Prochlorococcaceae</taxon>
        <taxon>Prochlorococcus</taxon>
    </lineage>
</organism>
<keyword id="KW-0414">Isoprene biosynthesis</keyword>
<keyword id="KW-0548">Nucleotidyltransferase</keyword>
<keyword id="KW-0808">Transferase</keyword>
<comment type="function">
    <text evidence="1">Catalyzes the formation of 4-diphosphocytidyl-2-C-methyl-D-erythritol from CTP and 2-C-methyl-D-erythritol 4-phosphate (MEP).</text>
</comment>
<comment type="catalytic activity">
    <reaction evidence="1">
        <text>2-C-methyl-D-erythritol 4-phosphate + CTP + H(+) = 4-CDP-2-C-methyl-D-erythritol + diphosphate</text>
        <dbReference type="Rhea" id="RHEA:13429"/>
        <dbReference type="ChEBI" id="CHEBI:15378"/>
        <dbReference type="ChEBI" id="CHEBI:33019"/>
        <dbReference type="ChEBI" id="CHEBI:37563"/>
        <dbReference type="ChEBI" id="CHEBI:57823"/>
        <dbReference type="ChEBI" id="CHEBI:58262"/>
        <dbReference type="EC" id="2.7.7.60"/>
    </reaction>
</comment>
<comment type="pathway">
    <text evidence="1">Isoprenoid biosynthesis; isopentenyl diphosphate biosynthesis via DXP pathway; isopentenyl diphosphate from 1-deoxy-D-xylulose 5-phosphate: step 2/6.</text>
</comment>
<comment type="similarity">
    <text evidence="1">Belongs to the IspD/TarI cytidylyltransferase family. IspD subfamily.</text>
</comment>
<dbReference type="EC" id="2.7.7.60" evidence="1"/>
<dbReference type="EMBL" id="CP000825">
    <property type="protein sequence ID" value="ABV50150.1"/>
    <property type="molecule type" value="Genomic_DNA"/>
</dbReference>
<dbReference type="RefSeq" id="WP_012007281.1">
    <property type="nucleotide sequence ID" value="NC_009840.1"/>
</dbReference>
<dbReference type="SMR" id="A8G3G9"/>
<dbReference type="STRING" id="93060.P9215_05341"/>
<dbReference type="KEGG" id="pmh:P9215_05341"/>
<dbReference type="eggNOG" id="COG1211">
    <property type="taxonomic scope" value="Bacteria"/>
</dbReference>
<dbReference type="HOGENOM" id="CLU_061281_1_0_3"/>
<dbReference type="OrthoDB" id="9806837at2"/>
<dbReference type="UniPathway" id="UPA00056">
    <property type="reaction ID" value="UER00093"/>
</dbReference>
<dbReference type="Proteomes" id="UP000002014">
    <property type="component" value="Chromosome"/>
</dbReference>
<dbReference type="GO" id="GO:0050518">
    <property type="term" value="F:2-C-methyl-D-erythritol 4-phosphate cytidylyltransferase activity"/>
    <property type="evidence" value="ECO:0007669"/>
    <property type="project" value="UniProtKB-UniRule"/>
</dbReference>
<dbReference type="GO" id="GO:0019288">
    <property type="term" value="P:isopentenyl diphosphate biosynthetic process, methylerythritol 4-phosphate pathway"/>
    <property type="evidence" value="ECO:0007669"/>
    <property type="project" value="UniProtKB-UniRule"/>
</dbReference>
<dbReference type="CDD" id="cd02516">
    <property type="entry name" value="CDP-ME_synthetase"/>
    <property type="match status" value="1"/>
</dbReference>
<dbReference type="FunFam" id="3.90.550.10:FF:000003">
    <property type="entry name" value="2-C-methyl-D-erythritol 4-phosphate cytidylyltransferase"/>
    <property type="match status" value="1"/>
</dbReference>
<dbReference type="Gene3D" id="3.90.550.10">
    <property type="entry name" value="Spore Coat Polysaccharide Biosynthesis Protein SpsA, Chain A"/>
    <property type="match status" value="1"/>
</dbReference>
<dbReference type="HAMAP" id="MF_00108">
    <property type="entry name" value="IspD"/>
    <property type="match status" value="1"/>
</dbReference>
<dbReference type="InterPro" id="IPR001228">
    <property type="entry name" value="IspD"/>
</dbReference>
<dbReference type="InterPro" id="IPR034683">
    <property type="entry name" value="IspD/TarI"/>
</dbReference>
<dbReference type="InterPro" id="IPR050088">
    <property type="entry name" value="IspD/TarI_cytidylyltransf_bact"/>
</dbReference>
<dbReference type="InterPro" id="IPR018294">
    <property type="entry name" value="ISPD_synthase_CS"/>
</dbReference>
<dbReference type="InterPro" id="IPR029044">
    <property type="entry name" value="Nucleotide-diphossugar_trans"/>
</dbReference>
<dbReference type="NCBIfam" id="TIGR00453">
    <property type="entry name" value="ispD"/>
    <property type="match status" value="1"/>
</dbReference>
<dbReference type="PANTHER" id="PTHR32125">
    <property type="entry name" value="2-C-METHYL-D-ERYTHRITOL 4-PHOSPHATE CYTIDYLYLTRANSFERASE, CHLOROPLASTIC"/>
    <property type="match status" value="1"/>
</dbReference>
<dbReference type="PANTHER" id="PTHR32125:SF4">
    <property type="entry name" value="2-C-METHYL-D-ERYTHRITOL 4-PHOSPHATE CYTIDYLYLTRANSFERASE, CHLOROPLASTIC"/>
    <property type="match status" value="1"/>
</dbReference>
<dbReference type="Pfam" id="PF01128">
    <property type="entry name" value="IspD"/>
    <property type="match status" value="1"/>
</dbReference>
<dbReference type="SUPFAM" id="SSF53448">
    <property type="entry name" value="Nucleotide-diphospho-sugar transferases"/>
    <property type="match status" value="1"/>
</dbReference>
<dbReference type="PROSITE" id="PS01295">
    <property type="entry name" value="ISPD"/>
    <property type="match status" value="1"/>
</dbReference>
<proteinExistence type="inferred from homology"/>
<protein>
    <recommendedName>
        <fullName evidence="1">2-C-methyl-D-erythritol 4-phosphate cytidylyltransferase</fullName>
        <ecNumber evidence="1">2.7.7.60</ecNumber>
    </recommendedName>
    <alternativeName>
        <fullName evidence="1">4-diphosphocytidyl-2C-methyl-D-erythritol synthase</fullName>
    </alternativeName>
    <alternativeName>
        <fullName evidence="1">MEP cytidylyltransferase</fullName>
        <shortName evidence="1">MCT</shortName>
    </alternativeName>
</protein>
<evidence type="ECO:0000255" key="1">
    <source>
        <dbReference type="HAMAP-Rule" id="MF_00108"/>
    </source>
</evidence>
<name>ISPD_PROM2</name>
<feature type="chain" id="PRO_1000057719" description="2-C-methyl-D-erythritol 4-phosphate cytidylyltransferase">
    <location>
        <begin position="1"/>
        <end position="223"/>
    </location>
</feature>
<feature type="site" description="Transition state stabilizer" evidence="1">
    <location>
        <position position="13"/>
    </location>
</feature>
<feature type="site" description="Transition state stabilizer" evidence="1">
    <location>
        <position position="20"/>
    </location>
</feature>
<feature type="site" description="Positions MEP for the nucleophilic attack" evidence="1">
    <location>
        <position position="150"/>
    </location>
</feature>
<feature type="site" description="Positions MEP for the nucleophilic attack" evidence="1">
    <location>
        <position position="206"/>
    </location>
</feature>
<reference key="1">
    <citation type="journal article" date="2007" name="PLoS Genet.">
        <title>Patterns and implications of gene gain and loss in the evolution of Prochlorococcus.</title>
        <authorList>
            <person name="Kettler G.C."/>
            <person name="Martiny A.C."/>
            <person name="Huang K."/>
            <person name="Zucker J."/>
            <person name="Coleman M.L."/>
            <person name="Rodrigue S."/>
            <person name="Chen F."/>
            <person name="Lapidus A."/>
            <person name="Ferriera S."/>
            <person name="Johnson J."/>
            <person name="Steglich C."/>
            <person name="Church G.M."/>
            <person name="Richardson P."/>
            <person name="Chisholm S.W."/>
        </authorList>
    </citation>
    <scope>NUCLEOTIDE SEQUENCE [LARGE SCALE GENOMIC DNA]</scope>
    <source>
        <strain>MIT 9215</strain>
    </source>
</reference>
<accession>A8G3G9</accession>
<sequence>MHFLIPAAGSGSRMKAGKNKLLIDLEGESLIYWTLKSVFSASSTNWVGIIGQPKDKNLLLNSAKDFAHKVHWINGGDTRQQSVFNGLKALPKDAEKVLIHDGARCLINPELIDLCAKQLDENEAVILATKVTDTIKIVDNEGFIKETPDRNHLWAAQTPQGFLVDRLIKAHKMAIDKNWTVTDDASLFEILNWKVKIVEGAYSNIKITSPIDLKIAKLFVKDP</sequence>